<sequence length="185" mass="20495">MRRYETIFISDPDLPEDNRATLFEKMQGLIAEHDGYIAFFDEWGARKLAYEVKKKKRGYYVLMDFCAEGSLIAEMERIMRIDDRILKFLTIQTEEEVDLDAVKEQVAKAKAEKEAAQKAAAEKAEAARLEAEKAAEEEAAKAAEAQAKEAPAAEAPAEEAPAAEAPAEAPAEEPAEEPKSDEEDA</sequence>
<reference key="1">
    <citation type="journal article" date="2012" name="Environ. Microbiol.">
        <title>The genome sequence of Desulfatibacillum alkenivorans AK-01: a blueprint for anaerobic alkane oxidation.</title>
        <authorList>
            <person name="Callaghan A.V."/>
            <person name="Morris B.E."/>
            <person name="Pereira I.A."/>
            <person name="McInerney M.J."/>
            <person name="Austin R.N."/>
            <person name="Groves J.T."/>
            <person name="Kukor J.J."/>
            <person name="Suflita J.M."/>
            <person name="Young L.Y."/>
            <person name="Zylstra G.J."/>
            <person name="Wawrik B."/>
        </authorList>
    </citation>
    <scope>NUCLEOTIDE SEQUENCE [LARGE SCALE GENOMIC DNA]</scope>
    <source>
        <strain>AK-01</strain>
    </source>
</reference>
<keyword id="KW-1185">Reference proteome</keyword>
<keyword id="KW-0687">Ribonucleoprotein</keyword>
<keyword id="KW-0689">Ribosomal protein</keyword>
<keyword id="KW-0694">RNA-binding</keyword>
<keyword id="KW-0699">rRNA-binding</keyword>
<name>RS6_DESAL</name>
<gene>
    <name evidence="1" type="primary">rpsF</name>
    <name type="ordered locus">Dalk_0919</name>
</gene>
<comment type="function">
    <text evidence="1">Binds together with bS18 to 16S ribosomal RNA.</text>
</comment>
<comment type="similarity">
    <text evidence="1">Belongs to the bacterial ribosomal protein bS6 family.</text>
</comment>
<protein>
    <recommendedName>
        <fullName evidence="1">Small ribosomal subunit protein bS6</fullName>
    </recommendedName>
    <alternativeName>
        <fullName evidence="3">30S ribosomal protein S6</fullName>
    </alternativeName>
</protein>
<dbReference type="EMBL" id="CP001322">
    <property type="protein sequence ID" value="ACL02624.1"/>
    <property type="molecule type" value="Genomic_DNA"/>
</dbReference>
<dbReference type="RefSeq" id="WP_012610062.1">
    <property type="nucleotide sequence ID" value="NC_011768.1"/>
</dbReference>
<dbReference type="SMR" id="B8FI57"/>
<dbReference type="KEGG" id="dal:Dalk_0919"/>
<dbReference type="eggNOG" id="COG0360">
    <property type="taxonomic scope" value="Bacteria"/>
</dbReference>
<dbReference type="HOGENOM" id="CLU_113441_4_1_7"/>
<dbReference type="Proteomes" id="UP000000739">
    <property type="component" value="Chromosome"/>
</dbReference>
<dbReference type="GO" id="GO:0005737">
    <property type="term" value="C:cytoplasm"/>
    <property type="evidence" value="ECO:0007669"/>
    <property type="project" value="UniProtKB-ARBA"/>
</dbReference>
<dbReference type="GO" id="GO:1990904">
    <property type="term" value="C:ribonucleoprotein complex"/>
    <property type="evidence" value="ECO:0007669"/>
    <property type="project" value="UniProtKB-KW"/>
</dbReference>
<dbReference type="GO" id="GO:0005840">
    <property type="term" value="C:ribosome"/>
    <property type="evidence" value="ECO:0007669"/>
    <property type="project" value="UniProtKB-KW"/>
</dbReference>
<dbReference type="GO" id="GO:0070181">
    <property type="term" value="F:small ribosomal subunit rRNA binding"/>
    <property type="evidence" value="ECO:0007669"/>
    <property type="project" value="TreeGrafter"/>
</dbReference>
<dbReference type="GO" id="GO:0003735">
    <property type="term" value="F:structural constituent of ribosome"/>
    <property type="evidence" value="ECO:0007669"/>
    <property type="project" value="InterPro"/>
</dbReference>
<dbReference type="GO" id="GO:0006412">
    <property type="term" value="P:translation"/>
    <property type="evidence" value="ECO:0007669"/>
    <property type="project" value="UniProtKB-UniRule"/>
</dbReference>
<dbReference type="CDD" id="cd00473">
    <property type="entry name" value="bS6"/>
    <property type="match status" value="1"/>
</dbReference>
<dbReference type="Gene3D" id="3.30.70.60">
    <property type="match status" value="1"/>
</dbReference>
<dbReference type="HAMAP" id="MF_00360">
    <property type="entry name" value="Ribosomal_bS6"/>
    <property type="match status" value="1"/>
</dbReference>
<dbReference type="InterPro" id="IPR000529">
    <property type="entry name" value="Ribosomal_bS6"/>
</dbReference>
<dbReference type="InterPro" id="IPR035980">
    <property type="entry name" value="Ribosomal_bS6_sf"/>
</dbReference>
<dbReference type="InterPro" id="IPR020814">
    <property type="entry name" value="Ribosomal_S6_plastid/chlpt"/>
</dbReference>
<dbReference type="InterPro" id="IPR014717">
    <property type="entry name" value="Transl_elong_EF1B/ribsomal_bS6"/>
</dbReference>
<dbReference type="NCBIfam" id="TIGR00166">
    <property type="entry name" value="S6"/>
    <property type="match status" value="1"/>
</dbReference>
<dbReference type="PANTHER" id="PTHR21011">
    <property type="entry name" value="MITOCHONDRIAL 28S RIBOSOMAL PROTEIN S6"/>
    <property type="match status" value="1"/>
</dbReference>
<dbReference type="PANTHER" id="PTHR21011:SF1">
    <property type="entry name" value="SMALL RIBOSOMAL SUBUNIT PROTEIN BS6M"/>
    <property type="match status" value="1"/>
</dbReference>
<dbReference type="Pfam" id="PF01250">
    <property type="entry name" value="Ribosomal_S6"/>
    <property type="match status" value="1"/>
</dbReference>
<dbReference type="SUPFAM" id="SSF54995">
    <property type="entry name" value="Ribosomal protein S6"/>
    <property type="match status" value="1"/>
</dbReference>
<evidence type="ECO:0000255" key="1">
    <source>
        <dbReference type="HAMAP-Rule" id="MF_00360"/>
    </source>
</evidence>
<evidence type="ECO:0000256" key="2">
    <source>
        <dbReference type="SAM" id="MobiDB-lite"/>
    </source>
</evidence>
<evidence type="ECO:0000305" key="3"/>
<proteinExistence type="inferred from homology"/>
<organism>
    <name type="scientific">Desulfatibacillum aliphaticivorans</name>
    <dbReference type="NCBI Taxonomy" id="218208"/>
    <lineage>
        <taxon>Bacteria</taxon>
        <taxon>Pseudomonadati</taxon>
        <taxon>Thermodesulfobacteriota</taxon>
        <taxon>Desulfobacteria</taxon>
        <taxon>Desulfobacterales</taxon>
        <taxon>Desulfatibacillaceae</taxon>
        <taxon>Desulfatibacillum</taxon>
    </lineage>
</organism>
<accession>B8FI57</accession>
<feature type="chain" id="PRO_1000120737" description="Small ribosomal subunit protein bS6">
    <location>
        <begin position="1"/>
        <end position="185"/>
    </location>
</feature>
<feature type="region of interest" description="Disordered" evidence="2">
    <location>
        <begin position="115"/>
        <end position="185"/>
    </location>
</feature>
<feature type="compositionally biased region" description="Basic and acidic residues" evidence="2">
    <location>
        <begin position="115"/>
        <end position="141"/>
    </location>
</feature>
<feature type="compositionally biased region" description="Low complexity" evidence="2">
    <location>
        <begin position="142"/>
        <end position="169"/>
    </location>
</feature>
<feature type="compositionally biased region" description="Acidic residues" evidence="2">
    <location>
        <begin position="170"/>
        <end position="185"/>
    </location>
</feature>